<gene>
    <name evidence="1" type="primary">pdxH</name>
    <name type="ordered locus">Mpe_A2931</name>
</gene>
<dbReference type="EC" id="1.4.3.5" evidence="1"/>
<dbReference type="EMBL" id="CP000555">
    <property type="protein sequence ID" value="ABM95884.1"/>
    <property type="status" value="ALT_INIT"/>
    <property type="molecule type" value="Genomic_DNA"/>
</dbReference>
<dbReference type="RefSeq" id="WP_049820827.1">
    <property type="nucleotide sequence ID" value="NC_008825.1"/>
</dbReference>
<dbReference type="SMR" id="A2SJZ5"/>
<dbReference type="STRING" id="420662.Mpe_A2931"/>
<dbReference type="KEGG" id="mpt:Mpe_A2931"/>
<dbReference type="eggNOG" id="COG0259">
    <property type="taxonomic scope" value="Bacteria"/>
</dbReference>
<dbReference type="HOGENOM" id="CLU_032263_2_2_4"/>
<dbReference type="UniPathway" id="UPA01068">
    <property type="reaction ID" value="UER00304"/>
</dbReference>
<dbReference type="UniPathway" id="UPA01068">
    <property type="reaction ID" value="UER00305"/>
</dbReference>
<dbReference type="Proteomes" id="UP000000366">
    <property type="component" value="Chromosome"/>
</dbReference>
<dbReference type="GO" id="GO:0010181">
    <property type="term" value="F:FMN binding"/>
    <property type="evidence" value="ECO:0007669"/>
    <property type="project" value="UniProtKB-UniRule"/>
</dbReference>
<dbReference type="GO" id="GO:0004733">
    <property type="term" value="F:pyridoxamine phosphate oxidase activity"/>
    <property type="evidence" value="ECO:0007669"/>
    <property type="project" value="UniProtKB-UniRule"/>
</dbReference>
<dbReference type="GO" id="GO:0008615">
    <property type="term" value="P:pyridoxine biosynthetic process"/>
    <property type="evidence" value="ECO:0007669"/>
    <property type="project" value="UniProtKB-KW"/>
</dbReference>
<dbReference type="Gene3D" id="2.30.110.10">
    <property type="entry name" value="Electron Transport, Fmn-binding Protein, Chain A"/>
    <property type="match status" value="1"/>
</dbReference>
<dbReference type="HAMAP" id="MF_01629">
    <property type="entry name" value="PdxH"/>
    <property type="match status" value="1"/>
</dbReference>
<dbReference type="InterPro" id="IPR000659">
    <property type="entry name" value="Pyridox_Oxase"/>
</dbReference>
<dbReference type="InterPro" id="IPR019740">
    <property type="entry name" value="Pyridox_Oxase_CS"/>
</dbReference>
<dbReference type="InterPro" id="IPR011576">
    <property type="entry name" value="Pyridox_Oxase_N"/>
</dbReference>
<dbReference type="InterPro" id="IPR019576">
    <property type="entry name" value="Pyridoxamine_oxidase_dimer_C"/>
</dbReference>
<dbReference type="InterPro" id="IPR012349">
    <property type="entry name" value="Split_barrel_FMN-bd"/>
</dbReference>
<dbReference type="NCBIfam" id="TIGR00558">
    <property type="entry name" value="pdxH"/>
    <property type="match status" value="1"/>
</dbReference>
<dbReference type="NCBIfam" id="NF004231">
    <property type="entry name" value="PRK05679.1"/>
    <property type="match status" value="1"/>
</dbReference>
<dbReference type="PANTHER" id="PTHR10851:SF0">
    <property type="entry name" value="PYRIDOXINE-5'-PHOSPHATE OXIDASE"/>
    <property type="match status" value="1"/>
</dbReference>
<dbReference type="PANTHER" id="PTHR10851">
    <property type="entry name" value="PYRIDOXINE-5-PHOSPHATE OXIDASE"/>
    <property type="match status" value="1"/>
</dbReference>
<dbReference type="Pfam" id="PF10590">
    <property type="entry name" value="PNP_phzG_C"/>
    <property type="match status" value="1"/>
</dbReference>
<dbReference type="Pfam" id="PF01243">
    <property type="entry name" value="PNPOx_N"/>
    <property type="match status" value="1"/>
</dbReference>
<dbReference type="PIRSF" id="PIRSF000190">
    <property type="entry name" value="Pyd_amn-ph_oxd"/>
    <property type="match status" value="1"/>
</dbReference>
<dbReference type="SUPFAM" id="SSF50475">
    <property type="entry name" value="FMN-binding split barrel"/>
    <property type="match status" value="1"/>
</dbReference>
<dbReference type="PROSITE" id="PS01064">
    <property type="entry name" value="PYRIDOX_OXIDASE"/>
    <property type="match status" value="1"/>
</dbReference>
<accession>A2SJZ5</accession>
<keyword id="KW-0285">Flavoprotein</keyword>
<keyword id="KW-0288">FMN</keyword>
<keyword id="KW-0560">Oxidoreductase</keyword>
<keyword id="KW-0664">Pyridoxine biosynthesis</keyword>
<keyword id="KW-1185">Reference proteome</keyword>
<name>PDXH_METPP</name>
<comment type="function">
    <text evidence="1">Catalyzes the oxidation of either pyridoxine 5'-phosphate (PNP) or pyridoxamine 5'-phosphate (PMP) into pyridoxal 5'-phosphate (PLP).</text>
</comment>
<comment type="catalytic activity">
    <reaction evidence="1">
        <text>pyridoxamine 5'-phosphate + O2 + H2O = pyridoxal 5'-phosphate + H2O2 + NH4(+)</text>
        <dbReference type="Rhea" id="RHEA:15817"/>
        <dbReference type="ChEBI" id="CHEBI:15377"/>
        <dbReference type="ChEBI" id="CHEBI:15379"/>
        <dbReference type="ChEBI" id="CHEBI:16240"/>
        <dbReference type="ChEBI" id="CHEBI:28938"/>
        <dbReference type="ChEBI" id="CHEBI:58451"/>
        <dbReference type="ChEBI" id="CHEBI:597326"/>
        <dbReference type="EC" id="1.4.3.5"/>
    </reaction>
</comment>
<comment type="catalytic activity">
    <reaction evidence="1">
        <text>pyridoxine 5'-phosphate + O2 = pyridoxal 5'-phosphate + H2O2</text>
        <dbReference type="Rhea" id="RHEA:15149"/>
        <dbReference type="ChEBI" id="CHEBI:15379"/>
        <dbReference type="ChEBI" id="CHEBI:16240"/>
        <dbReference type="ChEBI" id="CHEBI:58589"/>
        <dbReference type="ChEBI" id="CHEBI:597326"/>
        <dbReference type="EC" id="1.4.3.5"/>
    </reaction>
</comment>
<comment type="cofactor">
    <cofactor evidence="1">
        <name>FMN</name>
        <dbReference type="ChEBI" id="CHEBI:58210"/>
    </cofactor>
    <text evidence="1">Binds 1 FMN per subunit.</text>
</comment>
<comment type="pathway">
    <text evidence="1">Cofactor metabolism; pyridoxal 5'-phosphate salvage; pyridoxal 5'-phosphate from pyridoxamine 5'-phosphate: step 1/1.</text>
</comment>
<comment type="pathway">
    <text evidence="1">Cofactor metabolism; pyridoxal 5'-phosphate salvage; pyridoxal 5'-phosphate from pyridoxine 5'-phosphate: step 1/1.</text>
</comment>
<comment type="subunit">
    <text evidence="1">Homodimer.</text>
</comment>
<comment type="similarity">
    <text evidence="1">Belongs to the pyridoxamine 5'-phosphate oxidase family.</text>
</comment>
<comment type="sequence caution" evidence="2">
    <conflict type="erroneous initiation">
        <sequence resource="EMBL-CDS" id="ABM95884"/>
    </conflict>
</comment>
<protein>
    <recommendedName>
        <fullName evidence="1">Pyridoxine/pyridoxamine 5'-phosphate oxidase</fullName>
        <ecNumber evidence="1">1.4.3.5</ecNumber>
    </recommendedName>
    <alternativeName>
        <fullName evidence="1">PNP/PMP oxidase</fullName>
        <shortName evidence="1">PNPOx</shortName>
    </alternativeName>
    <alternativeName>
        <fullName evidence="1">Pyridoxal 5'-phosphate synthase</fullName>
    </alternativeName>
</protein>
<sequence>MRPDIADLRKSYEQGELDEAHSAADPLQQFEQWLDQALKAKLPEPNAMTLATVGADGRPSTRVVLIKGCDARGIVWYTNYESRKGRELAAHPFAALQFHWVDLERVVRIEGRVEKVSDTESDAYYRSRPLDSRLGAWASPQSQVIASRAVLVANAAKVGAQFLLNPPRPPHWGGFRLRPDRWEFWQGRKSRLHDRLRYTQQPTGGWLRERLAP</sequence>
<organism>
    <name type="scientific">Methylibium petroleiphilum (strain ATCC BAA-1232 / LMG 22953 / PM1)</name>
    <dbReference type="NCBI Taxonomy" id="420662"/>
    <lineage>
        <taxon>Bacteria</taxon>
        <taxon>Pseudomonadati</taxon>
        <taxon>Pseudomonadota</taxon>
        <taxon>Betaproteobacteria</taxon>
        <taxon>Burkholderiales</taxon>
        <taxon>Sphaerotilaceae</taxon>
        <taxon>Methylibium</taxon>
    </lineage>
</organism>
<evidence type="ECO:0000255" key="1">
    <source>
        <dbReference type="HAMAP-Rule" id="MF_01629"/>
    </source>
</evidence>
<evidence type="ECO:0000305" key="2"/>
<proteinExistence type="inferred from homology"/>
<feature type="chain" id="PRO_0000292303" description="Pyridoxine/pyridoxamine 5'-phosphate oxidase">
    <location>
        <begin position="1"/>
        <end position="213"/>
    </location>
</feature>
<feature type="binding site" evidence="1">
    <location>
        <begin position="9"/>
        <end position="12"/>
    </location>
    <ligand>
        <name>substrate</name>
    </ligand>
</feature>
<feature type="binding site" evidence="1">
    <location>
        <begin position="62"/>
        <end position="67"/>
    </location>
    <ligand>
        <name>FMN</name>
        <dbReference type="ChEBI" id="CHEBI:58210"/>
    </ligand>
</feature>
<feature type="binding site" evidence="1">
    <location>
        <position position="67"/>
    </location>
    <ligand>
        <name>substrate</name>
    </ligand>
</feature>
<feature type="binding site" evidence="1">
    <location>
        <begin position="77"/>
        <end position="78"/>
    </location>
    <ligand>
        <name>FMN</name>
        <dbReference type="ChEBI" id="CHEBI:58210"/>
    </ligand>
</feature>
<feature type="binding site" evidence="1">
    <location>
        <position position="83"/>
    </location>
    <ligand>
        <name>FMN</name>
        <dbReference type="ChEBI" id="CHEBI:58210"/>
    </ligand>
</feature>
<feature type="binding site" evidence="1">
    <location>
        <position position="84"/>
    </location>
    <ligand>
        <name>FMN</name>
        <dbReference type="ChEBI" id="CHEBI:58210"/>
    </ligand>
</feature>
<feature type="binding site" evidence="1">
    <location>
        <position position="124"/>
    </location>
    <ligand>
        <name>substrate</name>
    </ligand>
</feature>
<feature type="binding site" evidence="1">
    <location>
        <position position="128"/>
    </location>
    <ligand>
        <name>substrate</name>
    </ligand>
</feature>
<feature type="binding site" evidence="1">
    <location>
        <position position="132"/>
    </location>
    <ligand>
        <name>substrate</name>
    </ligand>
</feature>
<feature type="binding site" evidence="1">
    <location>
        <begin position="141"/>
        <end position="142"/>
    </location>
    <ligand>
        <name>FMN</name>
        <dbReference type="ChEBI" id="CHEBI:58210"/>
    </ligand>
</feature>
<feature type="binding site" evidence="1">
    <location>
        <position position="185"/>
    </location>
    <ligand>
        <name>FMN</name>
        <dbReference type="ChEBI" id="CHEBI:58210"/>
    </ligand>
</feature>
<feature type="binding site" evidence="1">
    <location>
        <begin position="191"/>
        <end position="193"/>
    </location>
    <ligand>
        <name>substrate</name>
    </ligand>
</feature>
<feature type="binding site" evidence="1">
    <location>
        <position position="195"/>
    </location>
    <ligand>
        <name>FMN</name>
        <dbReference type="ChEBI" id="CHEBI:58210"/>
    </ligand>
</feature>
<reference key="1">
    <citation type="journal article" date="2007" name="J. Bacteriol.">
        <title>Whole-genome analysis of the methyl tert-butyl ether-degrading beta-proteobacterium Methylibium petroleiphilum PM1.</title>
        <authorList>
            <person name="Kane S.R."/>
            <person name="Chakicherla A.Y."/>
            <person name="Chain P.S.G."/>
            <person name="Schmidt R."/>
            <person name="Shin M.W."/>
            <person name="Legler T.C."/>
            <person name="Scow K.M."/>
            <person name="Larimer F.W."/>
            <person name="Lucas S.M."/>
            <person name="Richardson P.M."/>
            <person name="Hristova K.R."/>
        </authorList>
    </citation>
    <scope>NUCLEOTIDE SEQUENCE [LARGE SCALE GENOMIC DNA]</scope>
    <source>
        <strain>ATCC BAA-1232 / LMG 22953 / PM1</strain>
    </source>
</reference>